<feature type="chain" id="PRO_1000134766" description="Transcriptional regulator MraZ">
    <location>
        <begin position="1"/>
        <end position="151"/>
    </location>
</feature>
<feature type="domain" description="SpoVT-AbrB 1" evidence="2">
    <location>
        <begin position="5"/>
        <end position="56"/>
    </location>
</feature>
<feature type="domain" description="SpoVT-AbrB 2" evidence="2">
    <location>
        <begin position="85"/>
        <end position="128"/>
    </location>
</feature>
<reference key="1">
    <citation type="journal article" date="2008" name="BMC Genomics">
        <title>Acidithiobacillus ferrooxidans metabolism: from genome sequence to industrial applications.</title>
        <authorList>
            <person name="Valdes J."/>
            <person name="Pedroso I."/>
            <person name="Quatrini R."/>
            <person name="Dodson R.J."/>
            <person name="Tettelin H."/>
            <person name="Blake R. II"/>
            <person name="Eisen J.A."/>
            <person name="Holmes D.S."/>
        </authorList>
    </citation>
    <scope>NUCLEOTIDE SEQUENCE [LARGE SCALE GENOMIC DNA]</scope>
    <source>
        <strain>ATCC 23270 / DSM 14882 / CIP 104768 / NCIMB 8455</strain>
    </source>
</reference>
<proteinExistence type="inferred from homology"/>
<protein>
    <recommendedName>
        <fullName>Transcriptional regulator MraZ</fullName>
    </recommendedName>
</protein>
<comment type="subunit">
    <text evidence="1">Forms oligomers.</text>
</comment>
<comment type="subcellular location">
    <subcellularLocation>
        <location evidence="1">Cytoplasm</location>
        <location evidence="1">Nucleoid</location>
    </subcellularLocation>
</comment>
<comment type="similarity">
    <text evidence="1">Belongs to the MraZ family.</text>
</comment>
<evidence type="ECO:0000255" key="1">
    <source>
        <dbReference type="HAMAP-Rule" id="MF_01008"/>
    </source>
</evidence>
<evidence type="ECO:0000255" key="2">
    <source>
        <dbReference type="PROSITE-ProRule" id="PRU01076"/>
    </source>
</evidence>
<sequence>MFRGTHRHSLDSKGRMNVPARFRDWLNAHCDGQLVVTIDAQSQKGERCLVAYPLPTWEKVERRIAELPSNNPAARQFQRLFVGQSEELRLDAQARILLSPNLRKFAELDKELVLVGQIDKFEIWDAARWDACQETWLSGADGFACLGDLVL</sequence>
<organism>
    <name type="scientific">Acidithiobacillus ferrooxidans (strain ATCC 23270 / DSM 14882 / CIP 104768 / NCIMB 8455)</name>
    <name type="common">Ferrobacillus ferrooxidans (strain ATCC 23270)</name>
    <dbReference type="NCBI Taxonomy" id="243159"/>
    <lineage>
        <taxon>Bacteria</taxon>
        <taxon>Pseudomonadati</taxon>
        <taxon>Pseudomonadota</taxon>
        <taxon>Acidithiobacillia</taxon>
        <taxon>Acidithiobacillales</taxon>
        <taxon>Acidithiobacillaceae</taxon>
        <taxon>Acidithiobacillus</taxon>
    </lineage>
</organism>
<name>MRAZ_ACIF2</name>
<keyword id="KW-0963">Cytoplasm</keyword>
<keyword id="KW-0238">DNA-binding</keyword>
<keyword id="KW-1185">Reference proteome</keyword>
<keyword id="KW-0677">Repeat</keyword>
<keyword id="KW-0804">Transcription</keyword>
<keyword id="KW-0805">Transcription regulation</keyword>
<dbReference type="EMBL" id="CP001219">
    <property type="protein sequence ID" value="ACK79730.1"/>
    <property type="molecule type" value="Genomic_DNA"/>
</dbReference>
<dbReference type="RefSeq" id="WP_012536023.1">
    <property type="nucleotide sequence ID" value="NC_011761.1"/>
</dbReference>
<dbReference type="SMR" id="B7J3W1"/>
<dbReference type="STRING" id="243159.AFE_0215"/>
<dbReference type="PaxDb" id="243159-AFE_0215"/>
<dbReference type="GeneID" id="65279600"/>
<dbReference type="KEGG" id="afr:AFE_0215"/>
<dbReference type="eggNOG" id="COG2001">
    <property type="taxonomic scope" value="Bacteria"/>
</dbReference>
<dbReference type="HOGENOM" id="CLU_107907_2_0_6"/>
<dbReference type="Proteomes" id="UP000001362">
    <property type="component" value="Chromosome"/>
</dbReference>
<dbReference type="GO" id="GO:0005737">
    <property type="term" value="C:cytoplasm"/>
    <property type="evidence" value="ECO:0007669"/>
    <property type="project" value="UniProtKB-UniRule"/>
</dbReference>
<dbReference type="GO" id="GO:0009295">
    <property type="term" value="C:nucleoid"/>
    <property type="evidence" value="ECO:0007669"/>
    <property type="project" value="UniProtKB-SubCell"/>
</dbReference>
<dbReference type="GO" id="GO:0003700">
    <property type="term" value="F:DNA-binding transcription factor activity"/>
    <property type="evidence" value="ECO:0007669"/>
    <property type="project" value="UniProtKB-UniRule"/>
</dbReference>
<dbReference type="GO" id="GO:0000976">
    <property type="term" value="F:transcription cis-regulatory region binding"/>
    <property type="evidence" value="ECO:0007669"/>
    <property type="project" value="TreeGrafter"/>
</dbReference>
<dbReference type="GO" id="GO:2000143">
    <property type="term" value="P:negative regulation of DNA-templated transcription initiation"/>
    <property type="evidence" value="ECO:0007669"/>
    <property type="project" value="TreeGrafter"/>
</dbReference>
<dbReference type="CDD" id="cd16321">
    <property type="entry name" value="MraZ_C"/>
    <property type="match status" value="1"/>
</dbReference>
<dbReference type="CDD" id="cd16320">
    <property type="entry name" value="MraZ_N"/>
    <property type="match status" value="1"/>
</dbReference>
<dbReference type="Gene3D" id="3.40.1550.20">
    <property type="entry name" value="Transcriptional regulator MraZ domain"/>
    <property type="match status" value="1"/>
</dbReference>
<dbReference type="HAMAP" id="MF_01008">
    <property type="entry name" value="MraZ"/>
    <property type="match status" value="1"/>
</dbReference>
<dbReference type="InterPro" id="IPR003444">
    <property type="entry name" value="MraZ"/>
</dbReference>
<dbReference type="InterPro" id="IPR035644">
    <property type="entry name" value="MraZ_C"/>
</dbReference>
<dbReference type="InterPro" id="IPR020603">
    <property type="entry name" value="MraZ_dom"/>
</dbReference>
<dbReference type="InterPro" id="IPR035642">
    <property type="entry name" value="MraZ_N"/>
</dbReference>
<dbReference type="InterPro" id="IPR038619">
    <property type="entry name" value="MraZ_sf"/>
</dbReference>
<dbReference type="InterPro" id="IPR007159">
    <property type="entry name" value="SpoVT-AbrB_dom"/>
</dbReference>
<dbReference type="InterPro" id="IPR037914">
    <property type="entry name" value="SpoVT-AbrB_sf"/>
</dbReference>
<dbReference type="NCBIfam" id="TIGR00242">
    <property type="entry name" value="division/cell wall cluster transcriptional repressor MraZ"/>
    <property type="match status" value="1"/>
</dbReference>
<dbReference type="PANTHER" id="PTHR34701">
    <property type="entry name" value="TRANSCRIPTIONAL REGULATOR MRAZ"/>
    <property type="match status" value="1"/>
</dbReference>
<dbReference type="PANTHER" id="PTHR34701:SF1">
    <property type="entry name" value="TRANSCRIPTIONAL REGULATOR MRAZ"/>
    <property type="match status" value="1"/>
</dbReference>
<dbReference type="Pfam" id="PF02381">
    <property type="entry name" value="MraZ"/>
    <property type="match status" value="2"/>
</dbReference>
<dbReference type="SUPFAM" id="SSF89447">
    <property type="entry name" value="AbrB/MazE/MraZ-like"/>
    <property type="match status" value="1"/>
</dbReference>
<dbReference type="PROSITE" id="PS51740">
    <property type="entry name" value="SPOVT_ABRB"/>
    <property type="match status" value="2"/>
</dbReference>
<accession>B7J3W1</accession>
<gene>
    <name evidence="1" type="primary">mraZ</name>
    <name type="ordered locus">AFE_0215</name>
</gene>